<name>BPIB1_MOUSE</name>
<evidence type="ECO:0000250" key="1"/>
<evidence type="ECO:0000255" key="2"/>
<evidence type="ECO:0000269" key="3">
    <source>
    </source>
</evidence>
<evidence type="ECO:0000269" key="4">
    <source>
    </source>
</evidence>
<evidence type="ECO:0000305" key="5"/>
<gene>
    <name type="primary">Bpifb1</name>
    <name type="synonym">Lplunc1</name>
</gene>
<feature type="signal peptide" evidence="2">
    <location>
        <begin position="1"/>
        <end position="21"/>
    </location>
</feature>
<feature type="chain" id="PRO_0000017181" description="BPI fold-containing family B member 1">
    <location>
        <begin position="22"/>
        <end position="474"/>
    </location>
</feature>
<feature type="glycosylation site" description="N-linked (GlcNAc...) asparagine" evidence="2">
    <location>
        <position position="153"/>
    </location>
</feature>
<feature type="glycosylation site" description="N-linked (GlcNAc...) asparagine" evidence="2">
    <location>
        <position position="160"/>
    </location>
</feature>
<feature type="glycosylation site" description="N-linked (GlcNAc...) asparagine" evidence="2">
    <location>
        <position position="263"/>
    </location>
</feature>
<feature type="glycosylation site" description="N-linked (GlcNAc...) asparagine" evidence="2">
    <location>
        <position position="400"/>
    </location>
</feature>
<feature type="disulfide bond" evidence="1">
    <location>
        <begin position="157"/>
        <end position="200"/>
    </location>
</feature>
<feature type="sequence conflict" description="In Ref. 3; AAH60982." evidence="5" ref="3">
    <original>Q</original>
    <variation>R</variation>
    <location>
        <position position="137"/>
    </location>
</feature>
<feature type="sequence conflict" description="In Ref. 3; AAH60982." evidence="5" ref="3">
    <original>V</original>
    <variation>M</variation>
    <location>
        <position position="361"/>
    </location>
</feature>
<feature type="sequence conflict" description="In Ref. 3; AAI00437." evidence="5" ref="3">
    <original>M</original>
    <variation>T</variation>
    <location>
        <position position="395"/>
    </location>
</feature>
<proteinExistence type="evidence at transcript level"/>
<comment type="function">
    <text evidence="3 4">May play a role in innate immunity in mouth, nose and lungs. Binds bacterial lipopolysaccharide (LPS) and modulates the cellular responses to LPS. May be involved in formation of the left-right axis in the node of the developing embryo.</text>
</comment>
<comment type="subcellular location">
    <subcellularLocation>
        <location evidence="3">Secreted</location>
    </subcellularLocation>
</comment>
<comment type="tissue specificity">
    <text evidence="3 4">Expressed in tongue, lung, thymus, and stomach. Expressed in epithelia of palate, anterior pharynx, trachea and upper bronchi. Expressed in distal tip of papillae in the anterior third of the tongue and in serous cells of von Ebner glands in the posterior third of the tongue. Expressed in columnar epithelium of the duodenum in embryonic gut at 16.5 dpc.</text>
</comment>
<comment type="developmental stage">
    <text evidence="3">Detectable in crown cells of the embryonic node from 7.5 dpc. Initial uniform expression develops asymmetrically with a higher level on the left side of the node until expression disappears around 13.5 dpc. Expressed in antrum pyloricum of the stomach from 11.5 dpc to 16.5 dpc and in dorsal tongue epithelium from 14.5 dpc to 16.5 dpc.</text>
</comment>
<comment type="miscellaneous">
    <text>Asymmetric expression in the embryonic node is dependent on Invs and Dnahc11.</text>
</comment>
<comment type="similarity">
    <text evidence="5">Belongs to the BPI/LBP/Plunc superfamily. Plunc family.</text>
</comment>
<comment type="sequence caution" evidence="5">
    <conflict type="frameshift">
        <sequence resource="EMBL-CDS" id="AAA87581"/>
    </conflict>
</comment>
<organism>
    <name type="scientific">Mus musculus</name>
    <name type="common">Mouse</name>
    <dbReference type="NCBI Taxonomy" id="10090"/>
    <lineage>
        <taxon>Eukaryota</taxon>
        <taxon>Metazoa</taxon>
        <taxon>Chordata</taxon>
        <taxon>Craniata</taxon>
        <taxon>Vertebrata</taxon>
        <taxon>Euteleostomi</taxon>
        <taxon>Mammalia</taxon>
        <taxon>Eutheria</taxon>
        <taxon>Euarchontoglires</taxon>
        <taxon>Glires</taxon>
        <taxon>Rodentia</taxon>
        <taxon>Myomorpha</taxon>
        <taxon>Muroidea</taxon>
        <taxon>Muridae</taxon>
        <taxon>Murinae</taxon>
        <taxon>Mus</taxon>
        <taxon>Mus</taxon>
    </lineage>
</organism>
<reference key="1">
    <citation type="submission" date="2002-09" db="EMBL/GenBank/DDBJ databases">
        <authorList>
            <person name="Snead M.L."/>
            <person name="Villanueva J."/>
            <person name="Paine M.L."/>
            <person name="Lei Y.P."/>
            <person name="Zhu D.H."/>
            <person name="Lusis J."/>
            <person name="Xia Y.-R."/>
            <person name="Yang J.-N."/>
        </authorList>
    </citation>
    <scope>NUCLEOTIDE SEQUENCE [MRNA]</scope>
    <source>
        <strain>Swiss Webster</strain>
    </source>
</reference>
<reference key="2">
    <citation type="journal article" date="2009" name="PLoS Biol.">
        <title>Lineage-specific biology revealed by a finished genome assembly of the mouse.</title>
        <authorList>
            <person name="Church D.M."/>
            <person name="Goodstadt L."/>
            <person name="Hillier L.W."/>
            <person name="Zody M.C."/>
            <person name="Goldstein S."/>
            <person name="She X."/>
            <person name="Bult C.J."/>
            <person name="Agarwala R."/>
            <person name="Cherry J.L."/>
            <person name="DiCuccio M."/>
            <person name="Hlavina W."/>
            <person name="Kapustin Y."/>
            <person name="Meric P."/>
            <person name="Maglott D."/>
            <person name="Birtle Z."/>
            <person name="Marques A.C."/>
            <person name="Graves T."/>
            <person name="Zhou S."/>
            <person name="Teague B."/>
            <person name="Potamousis K."/>
            <person name="Churas C."/>
            <person name="Place M."/>
            <person name="Herschleb J."/>
            <person name="Runnheim R."/>
            <person name="Forrest D."/>
            <person name="Amos-Landgraf J."/>
            <person name="Schwartz D.C."/>
            <person name="Cheng Z."/>
            <person name="Lindblad-Toh K."/>
            <person name="Eichler E.E."/>
            <person name="Ponting C.P."/>
        </authorList>
    </citation>
    <scope>NUCLEOTIDE SEQUENCE [LARGE SCALE GENOMIC DNA]</scope>
    <source>
        <strain>C57BL/6J</strain>
    </source>
</reference>
<reference key="3">
    <citation type="journal article" date="2004" name="Genome Res.">
        <title>The status, quality, and expansion of the NIH full-length cDNA project: the Mammalian Gene Collection (MGC).</title>
        <authorList>
            <consortium name="The MGC Project Team"/>
        </authorList>
    </citation>
    <scope>NUCLEOTIDE SEQUENCE [LARGE SCALE MRNA]</scope>
    <source>
        <tissue>Heart</tissue>
        <tissue>Lung</tissue>
    </source>
</reference>
<reference key="4">
    <citation type="journal article" date="2004" name="Dev. Dyn.">
        <title>Identification of a novel left-right asymmetrically expressed gene in the mouse belonging to the BPI/PLUNC superfamily.</title>
        <authorList>
            <person name="Hou J."/>
            <person name="Yashiro K."/>
            <person name="Okazaki Y."/>
            <person name="Saijoh Y."/>
            <person name="Hayashizaki Y."/>
            <person name="Hamada H."/>
        </authorList>
    </citation>
    <scope>FUNCTION</scope>
    <scope>SUBCELLULAR LOCATION</scope>
    <scope>TISSUE SPECIFICITY</scope>
    <scope>DEVELOPMENTAL STAGE</scope>
</reference>
<reference key="5">
    <citation type="journal article" date="2004" name="Genomics">
        <title>Cloning and expression of a mouse member of the PLUNC protein family exclusively expressed in tongue epithelium.</title>
        <authorList>
            <person name="LeClair E.E."/>
            <person name="Nomellini V."/>
            <person name="Bahena M."/>
            <person name="Singleton V."/>
            <person name="Bingle L."/>
            <person name="Craven C.J."/>
            <person name="Bingle C.D."/>
        </authorList>
    </citation>
    <scope>FUNCTION</scope>
    <scope>TISSUE SPECIFICITY</scope>
</reference>
<dbReference type="EMBL" id="U46068">
    <property type="protein sequence ID" value="AAA87581.3"/>
    <property type="status" value="ALT_FRAME"/>
    <property type="molecule type" value="mRNA"/>
</dbReference>
<dbReference type="EMBL" id="AL732601">
    <property type="status" value="NOT_ANNOTATED_CDS"/>
    <property type="molecule type" value="Genomic_DNA"/>
</dbReference>
<dbReference type="EMBL" id="BC060982">
    <property type="protein sequence ID" value="AAH60982.1"/>
    <property type="molecule type" value="mRNA"/>
</dbReference>
<dbReference type="EMBL" id="BC100436">
    <property type="protein sequence ID" value="AAI00437.1"/>
    <property type="molecule type" value="mRNA"/>
</dbReference>
<dbReference type="CCDS" id="CCDS16927.1"/>
<dbReference type="RefSeq" id="NP_001012392.1">
    <property type="nucleotide sequence ID" value="NM_001012392.1"/>
</dbReference>
<dbReference type="RefSeq" id="NP_700467.2">
    <property type="nucleotide sequence ID" value="NM_153418.2"/>
</dbReference>
<dbReference type="SMR" id="Q61114"/>
<dbReference type="FunCoup" id="Q61114">
    <property type="interactions" value="243"/>
</dbReference>
<dbReference type="STRING" id="10090.ENSMUSP00000080501"/>
<dbReference type="GlyCosmos" id="Q61114">
    <property type="glycosylation" value="4 sites, No reported glycans"/>
</dbReference>
<dbReference type="GlyGen" id="Q61114">
    <property type="glycosylation" value="4 sites"/>
</dbReference>
<dbReference type="iPTMnet" id="Q61114"/>
<dbReference type="PhosphoSitePlus" id="Q61114"/>
<dbReference type="PaxDb" id="10090-ENSMUSP00000080501"/>
<dbReference type="PeptideAtlas" id="Q61114"/>
<dbReference type="ProteomicsDB" id="265228"/>
<dbReference type="Antibodypedia" id="10629">
    <property type="antibodies" value="195 antibodies from 23 providers"/>
</dbReference>
<dbReference type="DNASU" id="228801"/>
<dbReference type="Ensembl" id="ENSMUST00000028987.7">
    <property type="protein sequence ID" value="ENSMUSP00000028987.7"/>
    <property type="gene ID" value="ENSMUSG00000027485.16"/>
</dbReference>
<dbReference type="Ensembl" id="ENSMUST00000081816.11">
    <property type="protein sequence ID" value="ENSMUSP00000080501.5"/>
    <property type="gene ID" value="ENSMUSG00000027485.16"/>
</dbReference>
<dbReference type="GeneID" id="228801"/>
<dbReference type="KEGG" id="mmu:228801"/>
<dbReference type="UCSC" id="uc008niw.1">
    <property type="organism name" value="mouse"/>
</dbReference>
<dbReference type="AGR" id="MGI:2137431"/>
<dbReference type="CTD" id="92747"/>
<dbReference type="MGI" id="MGI:2137431">
    <property type="gene designation" value="Bpifb1"/>
</dbReference>
<dbReference type="VEuPathDB" id="HostDB:ENSMUSG00000027485"/>
<dbReference type="eggNOG" id="KOG4160">
    <property type="taxonomic scope" value="Eukaryota"/>
</dbReference>
<dbReference type="GeneTree" id="ENSGT01100000263546"/>
<dbReference type="HOGENOM" id="CLU_050473_0_0_1"/>
<dbReference type="InParanoid" id="Q61114"/>
<dbReference type="OMA" id="ELCPVIK"/>
<dbReference type="OrthoDB" id="9833455at2759"/>
<dbReference type="PhylomeDB" id="Q61114"/>
<dbReference type="TreeFam" id="TF338541"/>
<dbReference type="Reactome" id="R-MMU-6803157">
    <property type="pathway name" value="Antimicrobial peptides"/>
</dbReference>
<dbReference type="BioGRID-ORCS" id="228801">
    <property type="hits" value="2 hits in 76 CRISPR screens"/>
</dbReference>
<dbReference type="ChiTaRS" id="Bpifb1">
    <property type="organism name" value="mouse"/>
</dbReference>
<dbReference type="PRO" id="PR:Q61114"/>
<dbReference type="Proteomes" id="UP000000589">
    <property type="component" value="Chromosome 2"/>
</dbReference>
<dbReference type="RNAct" id="Q61114">
    <property type="molecule type" value="protein"/>
</dbReference>
<dbReference type="Bgee" id="ENSMUSG00000027485">
    <property type="expression patterns" value="Expressed in epithelium of stomach and 181 other cell types or tissues"/>
</dbReference>
<dbReference type="GO" id="GO:0005615">
    <property type="term" value="C:extracellular space"/>
    <property type="evidence" value="ECO:0007669"/>
    <property type="project" value="InterPro"/>
</dbReference>
<dbReference type="GO" id="GO:0008289">
    <property type="term" value="F:lipid binding"/>
    <property type="evidence" value="ECO:0007669"/>
    <property type="project" value="InterPro"/>
</dbReference>
<dbReference type="GO" id="GO:0002227">
    <property type="term" value="P:innate immune response in mucosa"/>
    <property type="evidence" value="ECO:0007669"/>
    <property type="project" value="Ensembl"/>
</dbReference>
<dbReference type="GO" id="GO:0034144">
    <property type="term" value="P:negative regulation of toll-like receptor 4 signaling pathway"/>
    <property type="evidence" value="ECO:0007669"/>
    <property type="project" value="Ensembl"/>
</dbReference>
<dbReference type="CDD" id="cd00025">
    <property type="entry name" value="BPI1"/>
    <property type="match status" value="1"/>
</dbReference>
<dbReference type="CDD" id="cd00026">
    <property type="entry name" value="BPI2"/>
    <property type="match status" value="1"/>
</dbReference>
<dbReference type="FunFam" id="3.15.20.10:FF:000007">
    <property type="entry name" value="BPI fold-containing family B member 1"/>
    <property type="match status" value="1"/>
</dbReference>
<dbReference type="Gene3D" id="3.15.10.10">
    <property type="entry name" value="Bactericidal permeability-increasing protein, domain 1"/>
    <property type="match status" value="1"/>
</dbReference>
<dbReference type="Gene3D" id="3.15.20.10">
    <property type="entry name" value="Bactericidal permeability-increasing protein, domain 2"/>
    <property type="match status" value="1"/>
</dbReference>
<dbReference type="InterPro" id="IPR017943">
    <property type="entry name" value="Bactericidal_perm-incr_a/b_dom"/>
</dbReference>
<dbReference type="InterPro" id="IPR021193">
    <property type="entry name" value="Bpifb1"/>
</dbReference>
<dbReference type="InterPro" id="IPR001124">
    <property type="entry name" value="Lipid-bd_serum_glycop_C"/>
</dbReference>
<dbReference type="InterPro" id="IPR017942">
    <property type="entry name" value="Lipid-bd_serum_glycop_N"/>
</dbReference>
<dbReference type="PANTHER" id="PTHR47395">
    <property type="entry name" value="BPI FOLD-CONTAINING FAMILY B MEMBER 1"/>
    <property type="match status" value="1"/>
</dbReference>
<dbReference type="PANTHER" id="PTHR47395:SF1">
    <property type="entry name" value="BPI FOLD-CONTAINING FAMILY B MEMBER 1"/>
    <property type="match status" value="1"/>
</dbReference>
<dbReference type="Pfam" id="PF01273">
    <property type="entry name" value="LBP_BPI_CETP"/>
    <property type="match status" value="1"/>
</dbReference>
<dbReference type="Pfam" id="PF02886">
    <property type="entry name" value="LBP_BPI_CETP_C"/>
    <property type="match status" value="1"/>
</dbReference>
<dbReference type="PIRSF" id="PIRSF037186">
    <property type="entry name" value="PLUNC_long_form"/>
    <property type="match status" value="1"/>
</dbReference>
<dbReference type="SMART" id="SM00328">
    <property type="entry name" value="BPI1"/>
    <property type="match status" value="1"/>
</dbReference>
<dbReference type="SUPFAM" id="SSF55394">
    <property type="entry name" value="Bactericidal permeability-increasing protein, BPI"/>
    <property type="match status" value="2"/>
</dbReference>
<accession>Q61114</accession>
<accession>A2AJD5</accession>
<accession>Q497Q1</accession>
<accession>Q4VC32</accession>
<protein>
    <recommendedName>
        <fullName>BPI fold-containing family B member 1</fullName>
    </recommendedName>
    <alternativeName>
        <fullName>Long palate, lung and nasal epithelium carcinoma-associated protein 1</fullName>
    </alternativeName>
</protein>
<keyword id="KW-1015">Disulfide bond</keyword>
<keyword id="KW-0325">Glycoprotein</keyword>
<keyword id="KW-0391">Immunity</keyword>
<keyword id="KW-0399">Innate immunity</keyword>
<keyword id="KW-1185">Reference proteome</keyword>
<keyword id="KW-0964">Secreted</keyword>
<keyword id="KW-0732">Signal</keyword>
<sequence length="474" mass="52455">MAGPWIITLLCGLLGATLVQANVYPPAVLNLGPEVIQKHLTQALKDHDATAILQELPLLRAMQDKSGSIPILDSFVHTVLRYIIWMKVTSANILQLDVQPSTYDQELVVRIPLDMVAGLNTPLIKTIVEFQMSTEVQALIRVERSKSGPAHLNLSDCSSNESTLRLSLLHKLSFVVNSLAKNVMNLLVPALPQIVKNHLCPVIQQAFDDMYEDFLRLTTAPIALSPGALEFGLLSPAIQDSNILLNLKAKLLDSQARVTNWFNNSATSLMETTPDRAPFSLTVRQDLVNAIVTTLVPKEELVILLRFVIPDVARQLQMDIKEINAEAANKLGPTQMLKIFTHSTPHIVLNEGSARAAQSVVLEVFPTNTDVRPFFSLGIEASYEAQFFTEDNRLMLNFNNVSIERIKLMISDIKLFDPEVLKDTLTKILEYTLLPNENGKLRTGVPMSMSKALGYEKAMWSVSKGALKLTPASS</sequence>